<name>AES4_ALLMI</name>
<comment type="subcellular location">
    <subcellularLocation>
        <location evidence="1">Nucleus</location>
    </subcellularLocation>
</comment>
<proteinExistence type="inferred from homology"/>
<organism>
    <name type="scientific">Alligator mississippiensis</name>
    <name type="common">American alligator</name>
    <dbReference type="NCBI Taxonomy" id="8496"/>
    <lineage>
        <taxon>Eukaryota</taxon>
        <taxon>Metazoa</taxon>
        <taxon>Chordata</taxon>
        <taxon>Craniata</taxon>
        <taxon>Vertebrata</taxon>
        <taxon>Euteleostomi</taxon>
        <taxon>Archelosauria</taxon>
        <taxon>Archosauria</taxon>
        <taxon>Crocodylia</taxon>
        <taxon>Alligatoridae</taxon>
        <taxon>Alligatorinae</taxon>
        <taxon>Alligator</taxon>
    </lineage>
</organism>
<sequence length="72" mass="8874">VKRPMNAFMVWSQIERRKIMEQSPDMHNAEISKRLGKRWKLLKDSDKIPFIREAERLRLKHMADYPDYKYRP</sequence>
<accession>P40639</accession>
<reference key="1">
    <citation type="journal article" date="1993" name="PCR Methods Appl.">
        <title>PCR amplification of SRY-related gene sequences reveals evolutionary conservation of the SRY-box motif.</title>
        <authorList>
            <person name="Coriat A.M."/>
            <person name="Mueller U."/>
            <person name="Harry J.L."/>
            <person name="Uwanogho D."/>
            <person name="Sharpe P.T."/>
        </authorList>
    </citation>
    <scope>NUCLEOTIDE SEQUENCE [GENOMIC DNA]</scope>
</reference>
<evidence type="ECO:0000255" key="1">
    <source>
        <dbReference type="PROSITE-ProRule" id="PRU00267"/>
    </source>
</evidence>
<feature type="chain" id="PRO_0000048792" description="SRY-related protein AES4">
    <location>
        <begin position="1" status="less than"/>
        <end position="72" status="greater than"/>
    </location>
</feature>
<feature type="DNA-binding region" description="HMG box" evidence="1">
    <location>
        <begin position="1"/>
        <end position="69"/>
    </location>
</feature>
<feature type="non-terminal residue">
    <location>
        <position position="1"/>
    </location>
</feature>
<feature type="non-terminal residue">
    <location>
        <position position="72"/>
    </location>
</feature>
<keyword id="KW-0238">DNA-binding</keyword>
<keyword id="KW-0539">Nucleus</keyword>
<dbReference type="EMBL" id="M86315">
    <property type="protein sequence ID" value="AAA48528.1"/>
    <property type="molecule type" value="Genomic_DNA"/>
</dbReference>
<dbReference type="PIR" id="I50024">
    <property type="entry name" value="I50024"/>
</dbReference>
<dbReference type="SMR" id="P40639"/>
<dbReference type="eggNOG" id="KOG0527">
    <property type="taxonomic scope" value="Eukaryota"/>
</dbReference>
<dbReference type="GO" id="GO:0005634">
    <property type="term" value="C:nucleus"/>
    <property type="evidence" value="ECO:0007669"/>
    <property type="project" value="UniProtKB-SubCell"/>
</dbReference>
<dbReference type="GO" id="GO:0001228">
    <property type="term" value="F:DNA-binding transcription activator activity, RNA polymerase II-specific"/>
    <property type="evidence" value="ECO:0007669"/>
    <property type="project" value="TreeGrafter"/>
</dbReference>
<dbReference type="GO" id="GO:0000978">
    <property type="term" value="F:RNA polymerase II cis-regulatory region sequence-specific DNA binding"/>
    <property type="evidence" value="ECO:0007669"/>
    <property type="project" value="TreeGrafter"/>
</dbReference>
<dbReference type="GO" id="GO:0007420">
    <property type="term" value="P:brain development"/>
    <property type="evidence" value="ECO:0007669"/>
    <property type="project" value="TreeGrafter"/>
</dbReference>
<dbReference type="GO" id="GO:0048593">
    <property type="term" value="P:camera-type eye morphogenesis"/>
    <property type="evidence" value="ECO:0007669"/>
    <property type="project" value="TreeGrafter"/>
</dbReference>
<dbReference type="GO" id="GO:0000122">
    <property type="term" value="P:negative regulation of transcription by RNA polymerase II"/>
    <property type="evidence" value="ECO:0007669"/>
    <property type="project" value="TreeGrafter"/>
</dbReference>
<dbReference type="GO" id="GO:0030182">
    <property type="term" value="P:neuron differentiation"/>
    <property type="evidence" value="ECO:0007669"/>
    <property type="project" value="TreeGrafter"/>
</dbReference>
<dbReference type="CDD" id="cd22029">
    <property type="entry name" value="HMG-box_SoxC"/>
    <property type="match status" value="1"/>
</dbReference>
<dbReference type="FunFam" id="1.10.30.10:FF:000007">
    <property type="entry name" value="Transcription factor SOX"/>
    <property type="match status" value="1"/>
</dbReference>
<dbReference type="Gene3D" id="1.10.30.10">
    <property type="entry name" value="High mobility group box domain"/>
    <property type="match status" value="1"/>
</dbReference>
<dbReference type="InterPro" id="IPR009071">
    <property type="entry name" value="HMG_box_dom"/>
</dbReference>
<dbReference type="InterPro" id="IPR036910">
    <property type="entry name" value="HMG_box_dom_sf"/>
</dbReference>
<dbReference type="InterPro" id="IPR050140">
    <property type="entry name" value="SRY-related_HMG-box_TF-like"/>
</dbReference>
<dbReference type="PANTHER" id="PTHR10270">
    <property type="entry name" value="SOX TRANSCRIPTION FACTOR"/>
    <property type="match status" value="1"/>
</dbReference>
<dbReference type="PANTHER" id="PTHR10270:SF27">
    <property type="entry name" value="TRANSCRIPTION FACTOR SOX-4"/>
    <property type="match status" value="1"/>
</dbReference>
<dbReference type="Pfam" id="PF00505">
    <property type="entry name" value="HMG_box"/>
    <property type="match status" value="1"/>
</dbReference>
<dbReference type="PRINTS" id="PR00886">
    <property type="entry name" value="HIGHMOBLTY12"/>
</dbReference>
<dbReference type="SMART" id="SM00398">
    <property type="entry name" value="HMG"/>
    <property type="match status" value="1"/>
</dbReference>
<dbReference type="SUPFAM" id="SSF47095">
    <property type="entry name" value="HMG-box"/>
    <property type="match status" value="1"/>
</dbReference>
<dbReference type="PROSITE" id="PS50118">
    <property type="entry name" value="HMG_BOX_2"/>
    <property type="match status" value="1"/>
</dbReference>
<protein>
    <recommendedName>
        <fullName>SRY-related protein AES4</fullName>
    </recommendedName>
</protein>